<name>RIMP_STRA3</name>
<sequence>MIANQTIVDIVTQVVTPAIQAPFELVDVEYEKMGGDYVLSILIDKPGGITVEDTAQLTDVVSPLLDTIQPDPFPEQYMLEVSSPGLERPLKTAEALSNAVGSYINVSLYKSIDKVKIFEGDLLSFDGETLTIDYMDKTRHKTVDIPYQTVAKARLAVKL</sequence>
<accession>P62600</accession>
<accession>Q8E1H7</accession>
<accession>Q8E6Z4</accession>
<keyword id="KW-0963">Cytoplasm</keyword>
<keyword id="KW-0690">Ribosome biogenesis</keyword>
<comment type="function">
    <text evidence="1">Required for maturation of 30S ribosomal subunits.</text>
</comment>
<comment type="subcellular location">
    <subcellularLocation>
        <location evidence="1">Cytoplasm</location>
    </subcellularLocation>
</comment>
<comment type="similarity">
    <text evidence="1">Belongs to the RimP family.</text>
</comment>
<organism>
    <name type="scientific">Streptococcus agalactiae serotype III (strain NEM316)</name>
    <dbReference type="NCBI Taxonomy" id="211110"/>
    <lineage>
        <taxon>Bacteria</taxon>
        <taxon>Bacillati</taxon>
        <taxon>Bacillota</taxon>
        <taxon>Bacilli</taxon>
        <taxon>Lactobacillales</taxon>
        <taxon>Streptococcaceae</taxon>
        <taxon>Streptococcus</taxon>
    </lineage>
</organism>
<proteinExistence type="inferred from homology"/>
<reference key="1">
    <citation type="journal article" date="2002" name="Mol. Microbiol.">
        <title>Genome sequence of Streptococcus agalactiae, a pathogen causing invasive neonatal disease.</title>
        <authorList>
            <person name="Glaser P."/>
            <person name="Rusniok C."/>
            <person name="Buchrieser C."/>
            <person name="Chevalier F."/>
            <person name="Frangeul L."/>
            <person name="Msadek T."/>
            <person name="Zouine M."/>
            <person name="Couve E."/>
            <person name="Lalioui L."/>
            <person name="Poyart C."/>
            <person name="Trieu-Cuot P."/>
            <person name="Kunst F."/>
        </authorList>
    </citation>
    <scope>NUCLEOTIDE SEQUENCE [LARGE SCALE GENOMIC DNA]</scope>
    <source>
        <strain>NEM316</strain>
    </source>
</reference>
<feature type="chain" id="PRO_0000181929" description="Ribosome maturation factor RimP">
    <location>
        <begin position="1"/>
        <end position="159"/>
    </location>
</feature>
<gene>
    <name evidence="1" type="primary">rimP</name>
    <name type="ordered locus">gbs0413</name>
</gene>
<evidence type="ECO:0000255" key="1">
    <source>
        <dbReference type="HAMAP-Rule" id="MF_01077"/>
    </source>
</evidence>
<protein>
    <recommendedName>
        <fullName evidence="1">Ribosome maturation factor RimP</fullName>
    </recommendedName>
</protein>
<dbReference type="EMBL" id="AL766845">
    <property type="protein sequence ID" value="CAD46057.1"/>
    <property type="molecule type" value="Genomic_DNA"/>
</dbReference>
<dbReference type="SMR" id="P62600"/>
<dbReference type="KEGG" id="san:gbs0413"/>
<dbReference type="eggNOG" id="COG0779">
    <property type="taxonomic scope" value="Bacteria"/>
</dbReference>
<dbReference type="HOGENOM" id="CLU_070525_2_0_9"/>
<dbReference type="Proteomes" id="UP000000823">
    <property type="component" value="Chromosome"/>
</dbReference>
<dbReference type="GO" id="GO:0005829">
    <property type="term" value="C:cytosol"/>
    <property type="evidence" value="ECO:0007669"/>
    <property type="project" value="TreeGrafter"/>
</dbReference>
<dbReference type="GO" id="GO:0000028">
    <property type="term" value="P:ribosomal small subunit assembly"/>
    <property type="evidence" value="ECO:0007669"/>
    <property type="project" value="TreeGrafter"/>
</dbReference>
<dbReference type="GO" id="GO:0006412">
    <property type="term" value="P:translation"/>
    <property type="evidence" value="ECO:0007669"/>
    <property type="project" value="TreeGrafter"/>
</dbReference>
<dbReference type="CDD" id="cd01734">
    <property type="entry name" value="YlxS_C"/>
    <property type="match status" value="1"/>
</dbReference>
<dbReference type="Gene3D" id="2.30.30.180">
    <property type="entry name" value="Ribosome maturation factor RimP, C-terminal domain"/>
    <property type="match status" value="1"/>
</dbReference>
<dbReference type="Gene3D" id="3.30.300.70">
    <property type="entry name" value="RimP-like superfamily, N-terminal"/>
    <property type="match status" value="1"/>
</dbReference>
<dbReference type="HAMAP" id="MF_01077">
    <property type="entry name" value="RimP"/>
    <property type="match status" value="1"/>
</dbReference>
<dbReference type="InterPro" id="IPR003728">
    <property type="entry name" value="Ribosome_maturation_RimP"/>
</dbReference>
<dbReference type="InterPro" id="IPR028998">
    <property type="entry name" value="RimP_C"/>
</dbReference>
<dbReference type="InterPro" id="IPR036847">
    <property type="entry name" value="RimP_C_sf"/>
</dbReference>
<dbReference type="InterPro" id="IPR028989">
    <property type="entry name" value="RimP_N"/>
</dbReference>
<dbReference type="InterPro" id="IPR035956">
    <property type="entry name" value="RimP_N_sf"/>
</dbReference>
<dbReference type="NCBIfam" id="NF000928">
    <property type="entry name" value="PRK00092.1-2"/>
    <property type="match status" value="1"/>
</dbReference>
<dbReference type="PANTHER" id="PTHR33867">
    <property type="entry name" value="RIBOSOME MATURATION FACTOR RIMP"/>
    <property type="match status" value="1"/>
</dbReference>
<dbReference type="PANTHER" id="PTHR33867:SF1">
    <property type="entry name" value="RIBOSOME MATURATION FACTOR RIMP"/>
    <property type="match status" value="1"/>
</dbReference>
<dbReference type="Pfam" id="PF17384">
    <property type="entry name" value="DUF150_C"/>
    <property type="match status" value="1"/>
</dbReference>
<dbReference type="Pfam" id="PF02576">
    <property type="entry name" value="RimP_N"/>
    <property type="match status" value="1"/>
</dbReference>
<dbReference type="SUPFAM" id="SSF74942">
    <property type="entry name" value="YhbC-like, C-terminal domain"/>
    <property type="match status" value="1"/>
</dbReference>
<dbReference type="SUPFAM" id="SSF75420">
    <property type="entry name" value="YhbC-like, N-terminal domain"/>
    <property type="match status" value="1"/>
</dbReference>